<comment type="function">
    <text evidence="1">Escorts unspliced or incompletely spliced viral pre-mRNAs (late transcripts) out of the nucleus of infected cells. These pre-mRNAs carry a recognition sequence called Rev responsive element (RRE) located in the env gene, that is not present in fully spliced viral mRNAs (early transcripts). This function is essential since most viral proteins are translated from unspliced or partially spliced pre-mRNAs which cannot exit the nucleus by the pathway used by fully processed cellular mRNAs (By similarity).</text>
</comment>
<comment type="subunit">
    <text evidence="1">Homomultimer; when bound to the RRE. Multimeric assembly is essential for activity (By similarity).</text>
</comment>
<comment type="subcellular location">
    <subcellularLocation>
        <location>Host nucleus</location>
        <location>Host nucleolus</location>
    </subcellularLocation>
    <subcellularLocation>
        <location>Host cytoplasm</location>
    </subcellularLocation>
    <text evidence="1">The presence of both nuclear import and nuclear export signals leads to continuous shuttling between the nucleus and cytoplasm.</text>
</comment>
<comment type="domain">
    <text evidence="1">The RNA-binding motif binds to the RRE, a stem-and-loop structure present in incompletely spliced viral pre-mRNAs. This region also contains the NLS which mediates nuclear localization. These overlapping functions prevent Rev bound to RRE from undesirable return to the nucleus. When Rev binds the RRE, the NLS becomes masked while the NES remains accessible (By similarity).</text>
</comment>
<evidence type="ECO:0000250" key="1"/>
<evidence type="ECO:0000256" key="2">
    <source>
        <dbReference type="SAM" id="MobiDB-lite"/>
    </source>
</evidence>
<keyword id="KW-0014">AIDS</keyword>
<keyword id="KW-1035">Host cytoplasm</keyword>
<keyword id="KW-1048">Host nucleus</keyword>
<keyword id="KW-0509">mRNA transport</keyword>
<keyword id="KW-0694">RNA-binding</keyword>
<keyword id="KW-0813">Transport</keyword>
<organismHost>
    <name type="scientific">Homo sapiens</name>
    <name type="common">Human</name>
    <dbReference type="NCBI Taxonomy" id="9606"/>
</organismHost>
<proteinExistence type="inferred from homology"/>
<accession>P24104</accession>
<feature type="chain" id="PRO_0000085283" description="Protein Rev">
    <location>
        <begin position="1"/>
        <end position="100"/>
    </location>
</feature>
<feature type="region of interest" description="Homomultimerization" evidence="1">
    <location>
        <begin position="16"/>
        <end position="24"/>
    </location>
</feature>
<feature type="region of interest" description="Disordered" evidence="2">
    <location>
        <begin position="22"/>
        <end position="41"/>
    </location>
</feature>
<feature type="region of interest" description="Disordered" evidence="2">
    <location>
        <begin position="81"/>
        <end position="100"/>
    </location>
</feature>
<feature type="short sequence motif" description="Nuclear localization signal and RNA-binding (RRE)" evidence="1">
    <location>
        <begin position="35"/>
        <end position="49"/>
    </location>
</feature>
<feature type="short sequence motif" description="Nuclear export signal and binding to XPO1" evidence="1">
    <location>
        <begin position="71"/>
        <end position="82"/>
    </location>
</feature>
<feature type="compositionally biased region" description="Polar residues" evidence="2">
    <location>
        <begin position="22"/>
        <end position="34"/>
    </location>
</feature>
<protein>
    <recommendedName>
        <fullName>Protein Rev</fullName>
    </recommendedName>
    <alternativeName>
        <fullName>Regulator of expression of viral proteins</fullName>
    </alternativeName>
</protein>
<dbReference type="EMBL" id="D00835">
    <property type="protein sequence ID" value="BAA00715.1"/>
    <property type="molecule type" value="Genomic_DNA"/>
</dbReference>
<dbReference type="PIR" id="H38475">
    <property type="entry name" value="VKLJCA"/>
</dbReference>
<dbReference type="SMR" id="P24104"/>
<dbReference type="Proteomes" id="UP000007421">
    <property type="component" value="Segment"/>
</dbReference>
<dbReference type="GO" id="GO:0030430">
    <property type="term" value="C:host cell cytoplasm"/>
    <property type="evidence" value="ECO:0007669"/>
    <property type="project" value="UniProtKB-SubCell"/>
</dbReference>
<dbReference type="GO" id="GO:0044196">
    <property type="term" value="C:host cell nucleolus"/>
    <property type="evidence" value="ECO:0007669"/>
    <property type="project" value="UniProtKB-SubCell"/>
</dbReference>
<dbReference type="GO" id="GO:0003700">
    <property type="term" value="F:DNA-binding transcription factor activity"/>
    <property type="evidence" value="ECO:0007669"/>
    <property type="project" value="InterPro"/>
</dbReference>
<dbReference type="GO" id="GO:0003723">
    <property type="term" value="F:RNA binding"/>
    <property type="evidence" value="ECO:0007669"/>
    <property type="project" value="UniProtKB-KW"/>
</dbReference>
<dbReference type="GO" id="GO:0051028">
    <property type="term" value="P:mRNA transport"/>
    <property type="evidence" value="ECO:0007669"/>
    <property type="project" value="UniProtKB-KW"/>
</dbReference>
<dbReference type="Gene3D" id="6.10.140.630">
    <property type="match status" value="1"/>
</dbReference>
<dbReference type="InterPro" id="IPR000625">
    <property type="entry name" value="REV_protein"/>
</dbReference>
<dbReference type="Pfam" id="PF00424">
    <property type="entry name" value="REV"/>
    <property type="match status" value="1"/>
</dbReference>
<organism>
    <name type="scientific">Human immunodeficiency virus type 2 subtype A (isolate CAM2)</name>
    <name type="common">HIV-2</name>
    <dbReference type="NCBI Taxonomy" id="11715"/>
    <lineage>
        <taxon>Viruses</taxon>
        <taxon>Riboviria</taxon>
        <taxon>Pararnavirae</taxon>
        <taxon>Artverviricota</taxon>
        <taxon>Revtraviricetes</taxon>
        <taxon>Ortervirales</taxon>
        <taxon>Retroviridae</taxon>
        <taxon>Orthoretrovirinae</taxon>
        <taxon>Lentivirus</taxon>
        <taxon>Human immunodeficiency virus 2</taxon>
    </lineage>
</organism>
<name>REV_HV2CA</name>
<sequence length="100" mass="11860">MTERADEEGLQRKLRLIRLLHQTNPYPQGPGTASQRRNRRRRWRQRWRQILALADRIYTFPDPPADPPLDRTIQHLQELTIQDLPDPPTHPPESQRLAEA</sequence>
<gene>
    <name type="primary">rev</name>
</gene>
<reference key="1">
    <citation type="journal article" date="1991" name="J. Gen. Virol.">
        <title>Nucleotide sequence of a Guinea-Bissau-derived human immunodeficiency virus type 2 proviral clone (HIV-2CAM2).</title>
        <authorList>
            <person name="Tristem M."/>
            <person name="Hill F."/>
            <person name="Karpas A."/>
        </authorList>
    </citation>
    <scope>NUCLEOTIDE SEQUENCE [GENOMIC DNA]</scope>
</reference>